<reference key="1">
    <citation type="journal article" date="2011" name="J. Bacteriol.">
        <title>Genome sequence of the verrucomicrobium Opitutus terrae PB90-1, an abundant inhabitant of rice paddy soil ecosystems.</title>
        <authorList>
            <person name="van Passel M.W."/>
            <person name="Kant R."/>
            <person name="Palva A."/>
            <person name="Copeland A."/>
            <person name="Lucas S."/>
            <person name="Lapidus A."/>
            <person name="Glavina del Rio T."/>
            <person name="Pitluck S."/>
            <person name="Goltsman E."/>
            <person name="Clum A."/>
            <person name="Sun H."/>
            <person name="Schmutz J."/>
            <person name="Larimer F.W."/>
            <person name="Land M.L."/>
            <person name="Hauser L."/>
            <person name="Kyrpides N."/>
            <person name="Mikhailova N."/>
            <person name="Richardson P.P."/>
            <person name="Janssen P.H."/>
            <person name="de Vos W.M."/>
            <person name="Smidt H."/>
        </authorList>
    </citation>
    <scope>NUCLEOTIDE SEQUENCE [LARGE SCALE GENOMIC DNA]</scope>
    <source>
        <strain>DSM 11246 / JCM 15787 / PB90-1</strain>
    </source>
</reference>
<proteinExistence type="inferred from homology"/>
<keyword id="KW-0030">Aminoacyl-tRNA synthetase</keyword>
<keyword id="KW-0067">ATP-binding</keyword>
<keyword id="KW-0963">Cytoplasm</keyword>
<keyword id="KW-0436">Ligase</keyword>
<keyword id="KW-0547">Nucleotide-binding</keyword>
<keyword id="KW-0648">Protein biosynthesis</keyword>
<keyword id="KW-1185">Reference proteome</keyword>
<dbReference type="EC" id="6.1.1.23" evidence="1"/>
<dbReference type="EMBL" id="CP001032">
    <property type="protein sequence ID" value="ACB75757.1"/>
    <property type="molecule type" value="Genomic_DNA"/>
</dbReference>
<dbReference type="RefSeq" id="WP_012375292.1">
    <property type="nucleotide sequence ID" value="NC_010571.1"/>
</dbReference>
<dbReference type="SMR" id="B1ZSW8"/>
<dbReference type="STRING" id="452637.Oter_2475"/>
<dbReference type="KEGG" id="ote:Oter_2475"/>
<dbReference type="eggNOG" id="COG0173">
    <property type="taxonomic scope" value="Bacteria"/>
</dbReference>
<dbReference type="HOGENOM" id="CLU_014330_3_2_0"/>
<dbReference type="OrthoDB" id="9802326at2"/>
<dbReference type="Proteomes" id="UP000007013">
    <property type="component" value="Chromosome"/>
</dbReference>
<dbReference type="GO" id="GO:0005737">
    <property type="term" value="C:cytoplasm"/>
    <property type="evidence" value="ECO:0007669"/>
    <property type="project" value="UniProtKB-SubCell"/>
</dbReference>
<dbReference type="GO" id="GO:0004815">
    <property type="term" value="F:aspartate-tRNA ligase activity"/>
    <property type="evidence" value="ECO:0007669"/>
    <property type="project" value="UniProtKB-UniRule"/>
</dbReference>
<dbReference type="GO" id="GO:0050560">
    <property type="term" value="F:aspartate-tRNA(Asn) ligase activity"/>
    <property type="evidence" value="ECO:0007669"/>
    <property type="project" value="UniProtKB-EC"/>
</dbReference>
<dbReference type="GO" id="GO:0005524">
    <property type="term" value="F:ATP binding"/>
    <property type="evidence" value="ECO:0007669"/>
    <property type="project" value="UniProtKB-UniRule"/>
</dbReference>
<dbReference type="GO" id="GO:0003676">
    <property type="term" value="F:nucleic acid binding"/>
    <property type="evidence" value="ECO:0007669"/>
    <property type="project" value="InterPro"/>
</dbReference>
<dbReference type="GO" id="GO:0006422">
    <property type="term" value="P:aspartyl-tRNA aminoacylation"/>
    <property type="evidence" value="ECO:0007669"/>
    <property type="project" value="UniProtKB-UniRule"/>
</dbReference>
<dbReference type="CDD" id="cd00777">
    <property type="entry name" value="AspRS_core"/>
    <property type="match status" value="1"/>
</dbReference>
<dbReference type="CDD" id="cd04317">
    <property type="entry name" value="EcAspRS_like_N"/>
    <property type="match status" value="1"/>
</dbReference>
<dbReference type="Gene3D" id="3.30.930.10">
    <property type="entry name" value="Bira Bifunctional Protein, Domain 2"/>
    <property type="match status" value="1"/>
</dbReference>
<dbReference type="Gene3D" id="3.30.1360.30">
    <property type="entry name" value="GAD-like domain"/>
    <property type="match status" value="1"/>
</dbReference>
<dbReference type="Gene3D" id="2.40.50.140">
    <property type="entry name" value="Nucleic acid-binding proteins"/>
    <property type="match status" value="1"/>
</dbReference>
<dbReference type="HAMAP" id="MF_00044">
    <property type="entry name" value="Asp_tRNA_synth_type1"/>
    <property type="match status" value="1"/>
</dbReference>
<dbReference type="InterPro" id="IPR004364">
    <property type="entry name" value="Aa-tRNA-synt_II"/>
</dbReference>
<dbReference type="InterPro" id="IPR006195">
    <property type="entry name" value="aa-tRNA-synth_II"/>
</dbReference>
<dbReference type="InterPro" id="IPR045864">
    <property type="entry name" value="aa-tRNA-synth_II/BPL/LPL"/>
</dbReference>
<dbReference type="InterPro" id="IPR004524">
    <property type="entry name" value="Asp-tRNA-ligase_1"/>
</dbReference>
<dbReference type="InterPro" id="IPR047089">
    <property type="entry name" value="Asp-tRNA-ligase_1_N"/>
</dbReference>
<dbReference type="InterPro" id="IPR002312">
    <property type="entry name" value="Asp/Asn-tRNA-synth_IIb"/>
</dbReference>
<dbReference type="InterPro" id="IPR047090">
    <property type="entry name" value="AspRS_core"/>
</dbReference>
<dbReference type="InterPro" id="IPR004115">
    <property type="entry name" value="GAD-like_sf"/>
</dbReference>
<dbReference type="InterPro" id="IPR029351">
    <property type="entry name" value="GAD_dom"/>
</dbReference>
<dbReference type="InterPro" id="IPR012340">
    <property type="entry name" value="NA-bd_OB-fold"/>
</dbReference>
<dbReference type="InterPro" id="IPR004365">
    <property type="entry name" value="NA-bd_OB_tRNA"/>
</dbReference>
<dbReference type="NCBIfam" id="TIGR00459">
    <property type="entry name" value="aspS_bact"/>
    <property type="match status" value="1"/>
</dbReference>
<dbReference type="NCBIfam" id="NF001750">
    <property type="entry name" value="PRK00476.1"/>
    <property type="match status" value="1"/>
</dbReference>
<dbReference type="PANTHER" id="PTHR22594:SF5">
    <property type="entry name" value="ASPARTATE--TRNA LIGASE, MITOCHONDRIAL"/>
    <property type="match status" value="1"/>
</dbReference>
<dbReference type="PANTHER" id="PTHR22594">
    <property type="entry name" value="ASPARTYL/LYSYL-TRNA SYNTHETASE"/>
    <property type="match status" value="1"/>
</dbReference>
<dbReference type="Pfam" id="PF02938">
    <property type="entry name" value="GAD"/>
    <property type="match status" value="1"/>
</dbReference>
<dbReference type="Pfam" id="PF00152">
    <property type="entry name" value="tRNA-synt_2"/>
    <property type="match status" value="1"/>
</dbReference>
<dbReference type="Pfam" id="PF01336">
    <property type="entry name" value="tRNA_anti-codon"/>
    <property type="match status" value="1"/>
</dbReference>
<dbReference type="PRINTS" id="PR01042">
    <property type="entry name" value="TRNASYNTHASP"/>
</dbReference>
<dbReference type="SUPFAM" id="SSF55681">
    <property type="entry name" value="Class II aaRS and biotin synthetases"/>
    <property type="match status" value="1"/>
</dbReference>
<dbReference type="SUPFAM" id="SSF55261">
    <property type="entry name" value="GAD domain-like"/>
    <property type="match status" value="1"/>
</dbReference>
<dbReference type="SUPFAM" id="SSF50249">
    <property type="entry name" value="Nucleic acid-binding proteins"/>
    <property type="match status" value="1"/>
</dbReference>
<dbReference type="PROSITE" id="PS50862">
    <property type="entry name" value="AA_TRNA_LIGASE_II"/>
    <property type="match status" value="1"/>
</dbReference>
<organism>
    <name type="scientific">Opitutus terrae (strain DSM 11246 / JCM 15787 / PB90-1)</name>
    <dbReference type="NCBI Taxonomy" id="452637"/>
    <lineage>
        <taxon>Bacteria</taxon>
        <taxon>Pseudomonadati</taxon>
        <taxon>Verrucomicrobiota</taxon>
        <taxon>Opitutia</taxon>
        <taxon>Opitutales</taxon>
        <taxon>Opitutaceae</taxon>
        <taxon>Opitutus</taxon>
    </lineage>
</organism>
<comment type="function">
    <text evidence="1">Aspartyl-tRNA synthetase with relaxed tRNA specificity since it is able to aspartylate not only its cognate tRNA(Asp) but also tRNA(Asn). Reaction proceeds in two steps: L-aspartate is first activated by ATP to form Asp-AMP and then transferred to the acceptor end of tRNA(Asp/Asn).</text>
</comment>
<comment type="catalytic activity">
    <reaction evidence="1">
        <text>tRNA(Asx) + L-aspartate + ATP = L-aspartyl-tRNA(Asx) + AMP + diphosphate</text>
        <dbReference type="Rhea" id="RHEA:18349"/>
        <dbReference type="Rhea" id="RHEA-COMP:9710"/>
        <dbReference type="Rhea" id="RHEA-COMP:9711"/>
        <dbReference type="ChEBI" id="CHEBI:29991"/>
        <dbReference type="ChEBI" id="CHEBI:30616"/>
        <dbReference type="ChEBI" id="CHEBI:33019"/>
        <dbReference type="ChEBI" id="CHEBI:78442"/>
        <dbReference type="ChEBI" id="CHEBI:78516"/>
        <dbReference type="ChEBI" id="CHEBI:456215"/>
        <dbReference type="EC" id="6.1.1.23"/>
    </reaction>
</comment>
<comment type="subunit">
    <text evidence="1">Homodimer.</text>
</comment>
<comment type="subcellular location">
    <subcellularLocation>
        <location evidence="1">Cytoplasm</location>
    </subcellularLocation>
</comment>
<comment type="similarity">
    <text evidence="1">Belongs to the class-II aminoacyl-tRNA synthetase family. Type 1 subfamily.</text>
</comment>
<sequence>MHRTHHCAQLTTSQLGATVSLLGWVDTIRDQGGIIFVDLRDRKGITQIQLEPHENAKLAEQVKQLKPESVIGITGKVVRRPAGTENPALPTGEVEVVASSLEIHNISDTPPFPLDDAGGDKVNEDLRLTYRYLDLRRPKMRKNLQVRHRAAKSIRDYFDAQEFIEVETPALFKSTPEGAREYLVPSRIHPGQFYALSQSPQQFKQILMVAGVEKYFQIARCFRDEDLRADRQMEFTQVDVEASFVTREDIYALFEGMLKKVWKDVLDVDIPTPFPRMAFHDAMNRYGVDKPDVRFALELADFSELFKNSAFKVFQSTVAGGGVVKALNAKGLADLTQGELKSMEDTAKSLGAKGLAFIKVEGGEWKSPIVKFFTEPEKAELTKRLNIEEGDIIFFAAAPWEKACAILGRLRLESAAFLQKRGKLTIRHDDWQFLWVIDFPLMTYDEAENRYVATHHPFTAPVPDDTQYLDSDPKKVRGQHYDVVLNGMELGGGSIRIHQPVLQKKVFEDVLKIPQDVVESRFGYMLKAFTYGAPPHGGIAFGLDRMVALLCGTTSIRDVIAFPKTQKGQDLMAQSPTPVTPRQLKDLHIQTVMPE</sequence>
<accession>B1ZSW8</accession>
<gene>
    <name evidence="1" type="primary">aspS</name>
    <name type="ordered locus">Oter_2475</name>
</gene>
<protein>
    <recommendedName>
        <fullName evidence="1">Aspartate--tRNA(Asp/Asn) ligase</fullName>
        <ecNumber evidence="1">6.1.1.23</ecNumber>
    </recommendedName>
    <alternativeName>
        <fullName evidence="1">Aspartyl-tRNA synthetase</fullName>
        <shortName evidence="1">AspRS</shortName>
    </alternativeName>
    <alternativeName>
        <fullName evidence="1">Non-discriminating aspartyl-tRNA synthetase</fullName>
        <shortName evidence="1">ND-AspRS</shortName>
    </alternativeName>
</protein>
<name>SYDND_OPITP</name>
<feature type="chain" id="PRO_1000091021" description="Aspartate--tRNA(Asp/Asn) ligase">
    <location>
        <begin position="1"/>
        <end position="595"/>
    </location>
</feature>
<feature type="region of interest" description="Aspartate" evidence="1">
    <location>
        <begin position="201"/>
        <end position="204"/>
    </location>
</feature>
<feature type="binding site" evidence="1">
    <location>
        <position position="177"/>
    </location>
    <ligand>
        <name>L-aspartate</name>
        <dbReference type="ChEBI" id="CHEBI:29991"/>
    </ligand>
</feature>
<feature type="binding site" evidence="1">
    <location>
        <begin position="223"/>
        <end position="225"/>
    </location>
    <ligand>
        <name>ATP</name>
        <dbReference type="ChEBI" id="CHEBI:30616"/>
    </ligand>
</feature>
<feature type="binding site" evidence="1">
    <location>
        <position position="223"/>
    </location>
    <ligand>
        <name>L-aspartate</name>
        <dbReference type="ChEBI" id="CHEBI:29991"/>
    </ligand>
</feature>
<feature type="binding site" evidence="1">
    <location>
        <position position="232"/>
    </location>
    <ligand>
        <name>ATP</name>
        <dbReference type="ChEBI" id="CHEBI:30616"/>
    </ligand>
</feature>
<feature type="binding site" evidence="1">
    <location>
        <position position="455"/>
    </location>
    <ligand>
        <name>L-aspartate</name>
        <dbReference type="ChEBI" id="CHEBI:29991"/>
    </ligand>
</feature>
<feature type="binding site" evidence="1">
    <location>
        <position position="489"/>
    </location>
    <ligand>
        <name>ATP</name>
        <dbReference type="ChEBI" id="CHEBI:30616"/>
    </ligand>
</feature>
<feature type="binding site" evidence="1">
    <location>
        <position position="496"/>
    </location>
    <ligand>
        <name>L-aspartate</name>
        <dbReference type="ChEBI" id="CHEBI:29991"/>
    </ligand>
</feature>
<feature type="binding site" evidence="1">
    <location>
        <begin position="542"/>
        <end position="545"/>
    </location>
    <ligand>
        <name>ATP</name>
        <dbReference type="ChEBI" id="CHEBI:30616"/>
    </ligand>
</feature>
<feature type="site" description="Important for tRNA non-discrimination" evidence="1">
    <location>
        <position position="83"/>
    </location>
</feature>
<evidence type="ECO:0000255" key="1">
    <source>
        <dbReference type="HAMAP-Rule" id="MF_00044"/>
    </source>
</evidence>